<comment type="function">
    <text evidence="2">Catalyzes the condensation of only one isopentenyl pyrophosphate (IPP) unit in the cis configuration to E-geranyl diphosphate (E-GPP) generating the 15 carbon product (2Z,6E)-farnesyl diphosphate (Z-FPP or EZ-FPP). Only geranyl diphosphate (GPP) can be used as isoprenyl acceptor.</text>
</comment>
<comment type="catalytic activity">
    <reaction evidence="2">
        <text>isopentenyl diphosphate + (2E)-geranyl diphosphate = (2Z,6E)-farnesyl diphosphate + diphosphate</text>
        <dbReference type="Rhea" id="RHEA:23300"/>
        <dbReference type="ChEBI" id="CHEBI:33019"/>
        <dbReference type="ChEBI" id="CHEBI:58057"/>
        <dbReference type="ChEBI" id="CHEBI:128769"/>
        <dbReference type="ChEBI" id="CHEBI:162247"/>
        <dbReference type="EC" id="2.5.1.68"/>
    </reaction>
</comment>
<comment type="cofactor">
    <cofactor evidence="1">
        <name>Mg(2+)</name>
        <dbReference type="ChEBI" id="CHEBI:18420"/>
    </cofactor>
    <text evidence="1">Binds 2 magnesium ions per subunit.</text>
</comment>
<comment type="biophysicochemical properties">
    <kinetics>
        <KM evidence="2">2.3 uM for geranyl diphosphate (at 37 degrees Celsius and at pH 7.5)</KM>
        <KM evidence="2">1.2 uM for isopentenyl diphosphate (at 37 degrees Celsius and at pH 7.5)</KM>
        <text>kcat is 229 sec(-1) with geranyl diphosphate as substrate and 282 sec(-1) with isopentenyl diphosphate as substrate.</text>
    </kinetics>
</comment>
<comment type="subunit">
    <text evidence="1">Homodimer.</text>
</comment>
<comment type="similarity">
    <text evidence="3">Belongs to the UPP synthase family. Z-FPP synthase subfamily.</text>
</comment>
<gene>
    <name type="ordered locus">Tfu_0456</name>
</gene>
<dbReference type="EC" id="2.5.1.68"/>
<dbReference type="EMBL" id="CP000088">
    <property type="protein sequence ID" value="AAZ54494.1"/>
    <property type="molecule type" value="Genomic_DNA"/>
</dbReference>
<dbReference type="RefSeq" id="WP_011290903.1">
    <property type="nucleotide sequence ID" value="NC_007333.1"/>
</dbReference>
<dbReference type="SMR" id="Q47SS3"/>
<dbReference type="STRING" id="269800.Tfu_0456"/>
<dbReference type="KEGG" id="tfu:Tfu_0456"/>
<dbReference type="eggNOG" id="COG0020">
    <property type="taxonomic scope" value="Bacteria"/>
</dbReference>
<dbReference type="HOGENOM" id="CLU_038505_2_0_11"/>
<dbReference type="OrthoDB" id="4191603at2"/>
<dbReference type="BRENDA" id="2.5.1.68">
    <property type="organism ID" value="6298"/>
</dbReference>
<dbReference type="GO" id="GO:0005886">
    <property type="term" value="C:plasma membrane"/>
    <property type="evidence" value="ECO:0007669"/>
    <property type="project" value="TreeGrafter"/>
</dbReference>
<dbReference type="GO" id="GO:0045547">
    <property type="term" value="F:ditrans,polycis-polyprenyl diphosphate synthase [(2E,6E)-farnesyl diphosphate specific] activity"/>
    <property type="evidence" value="ECO:0007669"/>
    <property type="project" value="TreeGrafter"/>
</dbReference>
<dbReference type="GO" id="GO:0000287">
    <property type="term" value="F:magnesium ion binding"/>
    <property type="evidence" value="ECO:0007669"/>
    <property type="project" value="UniProtKB-UniRule"/>
</dbReference>
<dbReference type="GO" id="GO:0033850">
    <property type="term" value="F:Z-farnesyl diphosphate synthase activity"/>
    <property type="evidence" value="ECO:0000314"/>
    <property type="project" value="UniProtKB"/>
</dbReference>
<dbReference type="GO" id="GO:0016094">
    <property type="term" value="P:polyprenol biosynthetic process"/>
    <property type="evidence" value="ECO:0007669"/>
    <property type="project" value="TreeGrafter"/>
</dbReference>
<dbReference type="CDD" id="cd00475">
    <property type="entry name" value="Cis_IPPS"/>
    <property type="match status" value="1"/>
</dbReference>
<dbReference type="FunFam" id="3.40.1180.10:FF:000003">
    <property type="entry name" value="Isoprenyl transferase 2"/>
    <property type="match status" value="1"/>
</dbReference>
<dbReference type="Gene3D" id="3.40.1180.10">
    <property type="entry name" value="Decaprenyl diphosphate synthase-like"/>
    <property type="match status" value="1"/>
</dbReference>
<dbReference type="HAMAP" id="MF_01139">
    <property type="entry name" value="ISPT"/>
    <property type="match status" value="1"/>
</dbReference>
<dbReference type="InterPro" id="IPR001441">
    <property type="entry name" value="UPP_synth-like"/>
</dbReference>
<dbReference type="InterPro" id="IPR018520">
    <property type="entry name" value="UPP_synth-like_CS"/>
</dbReference>
<dbReference type="InterPro" id="IPR036424">
    <property type="entry name" value="UPP_synth-like_sf"/>
</dbReference>
<dbReference type="NCBIfam" id="NF011403">
    <property type="entry name" value="PRK14828.1"/>
    <property type="match status" value="1"/>
</dbReference>
<dbReference type="NCBIfam" id="TIGR00055">
    <property type="entry name" value="uppS"/>
    <property type="match status" value="1"/>
</dbReference>
<dbReference type="PANTHER" id="PTHR10291:SF43">
    <property type="entry name" value="DEHYDRODOLICHYL DIPHOSPHATE SYNTHASE COMPLEX SUBUNIT DHDDS"/>
    <property type="match status" value="1"/>
</dbReference>
<dbReference type="PANTHER" id="PTHR10291">
    <property type="entry name" value="DEHYDRODOLICHYL DIPHOSPHATE SYNTHASE FAMILY MEMBER"/>
    <property type="match status" value="1"/>
</dbReference>
<dbReference type="Pfam" id="PF01255">
    <property type="entry name" value="Prenyltransf"/>
    <property type="match status" value="1"/>
</dbReference>
<dbReference type="SUPFAM" id="SSF64005">
    <property type="entry name" value="Undecaprenyl diphosphate synthase"/>
    <property type="match status" value="1"/>
</dbReference>
<dbReference type="PROSITE" id="PS01066">
    <property type="entry name" value="UPP_SYNTHASE"/>
    <property type="match status" value="1"/>
</dbReference>
<organism>
    <name type="scientific">Thermobifida fusca (strain YX)</name>
    <dbReference type="NCBI Taxonomy" id="269800"/>
    <lineage>
        <taxon>Bacteria</taxon>
        <taxon>Bacillati</taxon>
        <taxon>Actinomycetota</taxon>
        <taxon>Actinomycetes</taxon>
        <taxon>Streptosporangiales</taxon>
        <taxon>Nocardiopsidaceae</taxon>
        <taxon>Thermobifida</taxon>
    </lineage>
</organism>
<accession>Q47SS3</accession>
<proteinExistence type="evidence at protein level"/>
<feature type="chain" id="PRO_0000419135" description="(2Z,6E)-farnesyl diphosphate synthase">
    <location>
        <begin position="1"/>
        <end position="254"/>
    </location>
</feature>
<feature type="active site" evidence="1">
    <location>
        <position position="34"/>
    </location>
</feature>
<feature type="active site" description="Proton acceptor" evidence="1">
    <location>
        <position position="83"/>
    </location>
</feature>
<feature type="binding site" evidence="1">
    <location>
        <position position="34"/>
    </location>
    <ligand>
        <name>Mg(2+)</name>
        <dbReference type="ChEBI" id="CHEBI:18420"/>
    </ligand>
</feature>
<feature type="binding site" evidence="1">
    <location>
        <begin position="35"/>
        <end position="38"/>
    </location>
    <ligand>
        <name>substrate</name>
    </ligand>
</feature>
<feature type="binding site" evidence="1">
    <location>
        <position position="39"/>
    </location>
    <ligand>
        <name>substrate</name>
    </ligand>
</feature>
<feature type="binding site" evidence="1">
    <location>
        <position position="52"/>
    </location>
    <ligand>
        <name>substrate</name>
    </ligand>
</feature>
<feature type="binding site" evidence="1">
    <location>
        <begin position="80"/>
        <end position="82"/>
    </location>
    <ligand>
        <name>substrate</name>
    </ligand>
</feature>
<feature type="binding site" evidence="1">
    <location>
        <position position="86"/>
    </location>
    <ligand>
        <name>substrate</name>
    </ligand>
</feature>
<feature type="binding site" evidence="1">
    <location>
        <position position="203"/>
    </location>
    <ligand>
        <name>substrate</name>
    </ligand>
</feature>
<feature type="binding site" evidence="1">
    <location>
        <begin position="209"/>
        <end position="211"/>
    </location>
    <ligand>
        <name>substrate</name>
    </ligand>
</feature>
<feature type="binding site" evidence="1">
    <location>
        <position position="222"/>
    </location>
    <ligand>
        <name>Mg(2+)</name>
        <dbReference type="ChEBI" id="CHEBI:18420"/>
    </ligand>
</feature>
<feature type="site" description="May play an important role in product chain-length determination or in allylic substrate recognition mechanisms">
    <location>
        <position position="59"/>
    </location>
</feature>
<feature type="site" description="Important for determining product length" evidence="1">
    <location>
        <position position="78"/>
    </location>
</feature>
<feature type="mutagenesis site" description="Able to incorporate E-GPP, Z-FPP, and Z,E,E-geranylgeranyl diphosphate (Z,E,E-GGPP) as the allylic substrates. Changes in the product chain-lengths." evidence="2">
    <original>I</original>
    <variation>A</variation>
    <location>
        <position position="59"/>
    </location>
</feature>
<feature type="mutagenesis site" description="No detectable transferase activity detected." evidence="2">
    <original>I</original>
    <variation>F</variation>
    <location>
        <position position="59"/>
    </location>
</feature>
<feature type="mutagenesis site" description="Able to incorporate E-GPP, Z-FPP, and Z,E,E-geranylgeranyl diphosphate (Z,E,E-GGPP) as the allylic substrates. Changes in the product chain-lengths." evidence="2">
    <original>I</original>
    <variation>L</variation>
    <location>
        <position position="59"/>
    </location>
</feature>
<feature type="mutagenesis site" description="Able to incorporate E-GPP, Z-FPP, and Z,E,E-geranylgeranyl diphosphate (Z,E,E-GGPP) as the allylic substrates. Changes in the product chain-lengths." evidence="2">
    <original>I</original>
    <variation>M</variation>
    <location>
        <position position="59"/>
    </location>
</feature>
<feature type="mutagenesis site" description="Able to incorporate E-GPP, Z-FPP, and Z,E,E-geranylgeranyl diphosphate (Z,E,E-GGPP) as the allylic substrates. Changes in the product chain-lengths." evidence="2">
    <original>I</original>
    <variation>V</variation>
    <location>
        <position position="59"/>
    </location>
</feature>
<name>ZFPP_THEFY</name>
<evidence type="ECO:0000250" key="1"/>
<evidence type="ECO:0000269" key="2">
    <source>
    </source>
</evidence>
<evidence type="ECO:0000305" key="3"/>
<sequence length="254" mass="28884">MGLLRIPLYRLYERRLERALSNAPKPRHVGVILDGNRRWARLSGLSSPKEGHRAGAEKIFELLDWCDEVGVQVVTLWLLSTDNLARPPEELEPLFEIIENTVRRLCNEGRRVNPMGALDLLPASTAQVMKEAGTTTERNPGLLVNVAVGYGGRREIADAVRSLLLEEAAKGTTLEELAERLDLDDIAKHLYTRGQPDPDLLIRTSGEQRLSGFLLWQSAHSEFYFCEVFWPAFRKIDFLRALRSYSVRQRRFGC</sequence>
<reference key="1">
    <citation type="journal article" date="2007" name="J. Bacteriol.">
        <title>Genome sequence and analysis of the soil cellulolytic actinomycete Thermobifida fusca YX.</title>
        <authorList>
            <person name="Lykidis A."/>
            <person name="Mavromatis K."/>
            <person name="Ivanova N."/>
            <person name="Anderson I."/>
            <person name="Land M."/>
            <person name="DiBartolo G."/>
            <person name="Martinez M."/>
            <person name="Lapidus A."/>
            <person name="Lucas S."/>
            <person name="Copeland A."/>
            <person name="Richardson P."/>
            <person name="Wilson D.B."/>
            <person name="Kyrpides N."/>
        </authorList>
    </citation>
    <scope>NUCLEOTIDE SEQUENCE [LARGE SCALE GENOMIC DNA]</scope>
    <source>
        <strain>YX</strain>
    </source>
</reference>
<reference key="2">
    <citation type="journal article" date="2008" name="Biochem. Biophys. Res. Commun.">
        <title>Cloning and functional analysis of novel short-chain cis-prenyltransferases.</title>
        <authorList>
            <person name="Ambo T."/>
            <person name="Noike M."/>
            <person name="Kurokawa H."/>
            <person name="Koyama T."/>
        </authorList>
    </citation>
    <scope>FUNCTION AS A FARNESYL DIPHOSPHATE SYNTHASE</scope>
    <scope>CATALYTIC ACTIVITY</scope>
    <scope>MUTAGENESIS OF ILE-59</scope>
    <scope>BIOPHYSICOCHEMICAL PROPERTIES</scope>
    <scope>SUBSTRATE SPECIFICITY</scope>
</reference>
<protein>
    <recommendedName>
        <fullName>(2Z,6E)-farnesyl diphosphate synthase</fullName>
        <ecNumber>2.5.1.68</ecNumber>
    </recommendedName>
    <alternativeName>
        <fullName>Cis-prenyltransferase</fullName>
    </alternativeName>
    <alternativeName>
        <fullName>Short-chain Z-isoprenyl diphosphate synthase</fullName>
    </alternativeName>
    <alternativeName>
        <fullName>Z-FPP synthase</fullName>
        <shortName>Z-FPPS</shortName>
    </alternativeName>
    <alternativeName>
        <fullName>Z-Polyprenyl diphosphate synthase</fullName>
    </alternativeName>
    <alternativeName>
        <fullName>Z-isoprenyl diphosphate synthase</fullName>
    </alternativeName>
</protein>
<keyword id="KW-0460">Magnesium</keyword>
<keyword id="KW-0479">Metal-binding</keyword>
<keyword id="KW-0808">Transferase</keyword>